<protein>
    <recommendedName>
        <fullName evidence="1">ATP synthase subunit beta</fullName>
        <ecNumber evidence="1">7.1.2.2</ecNumber>
    </recommendedName>
    <alternativeName>
        <fullName evidence="1">ATP synthase F1 sector subunit beta</fullName>
    </alternativeName>
    <alternativeName>
        <fullName evidence="1">F-ATPase subunit beta</fullName>
    </alternativeName>
</protein>
<proteinExistence type="inferred from homology"/>
<keyword id="KW-0066">ATP synthesis</keyword>
<keyword id="KW-0067">ATP-binding</keyword>
<keyword id="KW-1003">Cell membrane</keyword>
<keyword id="KW-0139">CF(1)</keyword>
<keyword id="KW-0375">Hydrogen ion transport</keyword>
<keyword id="KW-0406">Ion transport</keyword>
<keyword id="KW-0472">Membrane</keyword>
<keyword id="KW-0547">Nucleotide-binding</keyword>
<keyword id="KW-1185">Reference proteome</keyword>
<keyword id="KW-1278">Translocase</keyword>
<keyword id="KW-0813">Transport</keyword>
<reference key="1">
    <citation type="submission" date="2006-12" db="EMBL/GenBank/DDBJ databases">
        <title>Complete sequence of chromosome 1 of Nocardioides sp. JS614.</title>
        <authorList>
            <person name="Copeland A."/>
            <person name="Lucas S."/>
            <person name="Lapidus A."/>
            <person name="Barry K."/>
            <person name="Detter J.C."/>
            <person name="Glavina del Rio T."/>
            <person name="Hammon N."/>
            <person name="Israni S."/>
            <person name="Dalin E."/>
            <person name="Tice H."/>
            <person name="Pitluck S."/>
            <person name="Thompson L.S."/>
            <person name="Brettin T."/>
            <person name="Bruce D."/>
            <person name="Han C."/>
            <person name="Tapia R."/>
            <person name="Schmutz J."/>
            <person name="Larimer F."/>
            <person name="Land M."/>
            <person name="Hauser L."/>
            <person name="Kyrpides N."/>
            <person name="Kim E."/>
            <person name="Mattes T."/>
            <person name="Gossett J."/>
            <person name="Richardson P."/>
        </authorList>
    </citation>
    <scope>NUCLEOTIDE SEQUENCE [LARGE SCALE GENOMIC DNA]</scope>
    <source>
        <strain>ATCC BAA-499 / JS614</strain>
    </source>
</reference>
<dbReference type="EC" id="7.1.2.2" evidence="1"/>
<dbReference type="EMBL" id="CP000509">
    <property type="protein sequence ID" value="ABL81276.1"/>
    <property type="molecule type" value="Genomic_DNA"/>
</dbReference>
<dbReference type="RefSeq" id="WP_011755223.1">
    <property type="nucleotide sequence ID" value="NC_008699.1"/>
</dbReference>
<dbReference type="SMR" id="A1SHJ1"/>
<dbReference type="STRING" id="196162.Noca_1763"/>
<dbReference type="KEGG" id="nca:Noca_1763"/>
<dbReference type="eggNOG" id="COG0055">
    <property type="taxonomic scope" value="Bacteria"/>
</dbReference>
<dbReference type="HOGENOM" id="CLU_022398_0_2_11"/>
<dbReference type="OrthoDB" id="9801639at2"/>
<dbReference type="Proteomes" id="UP000000640">
    <property type="component" value="Chromosome"/>
</dbReference>
<dbReference type="GO" id="GO:0005886">
    <property type="term" value="C:plasma membrane"/>
    <property type="evidence" value="ECO:0007669"/>
    <property type="project" value="UniProtKB-SubCell"/>
</dbReference>
<dbReference type="GO" id="GO:0045259">
    <property type="term" value="C:proton-transporting ATP synthase complex"/>
    <property type="evidence" value="ECO:0007669"/>
    <property type="project" value="UniProtKB-KW"/>
</dbReference>
<dbReference type="GO" id="GO:0005524">
    <property type="term" value="F:ATP binding"/>
    <property type="evidence" value="ECO:0007669"/>
    <property type="project" value="UniProtKB-UniRule"/>
</dbReference>
<dbReference type="GO" id="GO:0016887">
    <property type="term" value="F:ATP hydrolysis activity"/>
    <property type="evidence" value="ECO:0007669"/>
    <property type="project" value="InterPro"/>
</dbReference>
<dbReference type="GO" id="GO:0046933">
    <property type="term" value="F:proton-transporting ATP synthase activity, rotational mechanism"/>
    <property type="evidence" value="ECO:0007669"/>
    <property type="project" value="UniProtKB-UniRule"/>
</dbReference>
<dbReference type="CDD" id="cd18110">
    <property type="entry name" value="ATP-synt_F1_beta_C"/>
    <property type="match status" value="1"/>
</dbReference>
<dbReference type="CDD" id="cd18115">
    <property type="entry name" value="ATP-synt_F1_beta_N"/>
    <property type="match status" value="1"/>
</dbReference>
<dbReference type="CDD" id="cd01133">
    <property type="entry name" value="F1-ATPase_beta_CD"/>
    <property type="match status" value="1"/>
</dbReference>
<dbReference type="FunFam" id="1.10.1140.10:FF:000001">
    <property type="entry name" value="ATP synthase subunit beta"/>
    <property type="match status" value="1"/>
</dbReference>
<dbReference type="FunFam" id="2.40.10.170:FF:000005">
    <property type="entry name" value="ATP synthase subunit beta"/>
    <property type="match status" value="1"/>
</dbReference>
<dbReference type="FunFam" id="3.40.50.300:FF:000004">
    <property type="entry name" value="ATP synthase subunit beta"/>
    <property type="match status" value="1"/>
</dbReference>
<dbReference type="Gene3D" id="2.40.10.170">
    <property type="match status" value="1"/>
</dbReference>
<dbReference type="Gene3D" id="1.10.1140.10">
    <property type="entry name" value="Bovine Mitochondrial F1-atpase, Atp Synthase Beta Chain, Chain D, domain 3"/>
    <property type="match status" value="1"/>
</dbReference>
<dbReference type="Gene3D" id="3.40.50.300">
    <property type="entry name" value="P-loop containing nucleotide triphosphate hydrolases"/>
    <property type="match status" value="1"/>
</dbReference>
<dbReference type="HAMAP" id="MF_01347">
    <property type="entry name" value="ATP_synth_beta_bact"/>
    <property type="match status" value="1"/>
</dbReference>
<dbReference type="InterPro" id="IPR003593">
    <property type="entry name" value="AAA+_ATPase"/>
</dbReference>
<dbReference type="InterPro" id="IPR055190">
    <property type="entry name" value="ATP-synt_VA_C"/>
</dbReference>
<dbReference type="InterPro" id="IPR005722">
    <property type="entry name" value="ATP_synth_F1_bsu"/>
</dbReference>
<dbReference type="InterPro" id="IPR020003">
    <property type="entry name" value="ATPase_a/bsu_AS"/>
</dbReference>
<dbReference type="InterPro" id="IPR050053">
    <property type="entry name" value="ATPase_alpha/beta_chains"/>
</dbReference>
<dbReference type="InterPro" id="IPR004100">
    <property type="entry name" value="ATPase_F1/V1/A1_a/bsu_N"/>
</dbReference>
<dbReference type="InterPro" id="IPR036121">
    <property type="entry name" value="ATPase_F1/V1/A1_a/bsu_N_sf"/>
</dbReference>
<dbReference type="InterPro" id="IPR000194">
    <property type="entry name" value="ATPase_F1/V1/A1_a/bsu_nucl-bd"/>
</dbReference>
<dbReference type="InterPro" id="IPR024034">
    <property type="entry name" value="ATPase_F1/V1_b/a_C"/>
</dbReference>
<dbReference type="InterPro" id="IPR027417">
    <property type="entry name" value="P-loop_NTPase"/>
</dbReference>
<dbReference type="NCBIfam" id="TIGR01039">
    <property type="entry name" value="atpD"/>
    <property type="match status" value="1"/>
</dbReference>
<dbReference type="PANTHER" id="PTHR15184">
    <property type="entry name" value="ATP SYNTHASE"/>
    <property type="match status" value="1"/>
</dbReference>
<dbReference type="PANTHER" id="PTHR15184:SF71">
    <property type="entry name" value="ATP SYNTHASE SUBUNIT BETA, MITOCHONDRIAL"/>
    <property type="match status" value="1"/>
</dbReference>
<dbReference type="Pfam" id="PF00006">
    <property type="entry name" value="ATP-synt_ab"/>
    <property type="match status" value="1"/>
</dbReference>
<dbReference type="Pfam" id="PF02874">
    <property type="entry name" value="ATP-synt_ab_N"/>
    <property type="match status" value="1"/>
</dbReference>
<dbReference type="Pfam" id="PF22919">
    <property type="entry name" value="ATP-synt_VA_C"/>
    <property type="match status" value="1"/>
</dbReference>
<dbReference type="SMART" id="SM00382">
    <property type="entry name" value="AAA"/>
    <property type="match status" value="1"/>
</dbReference>
<dbReference type="SUPFAM" id="SSF47917">
    <property type="entry name" value="C-terminal domain of alpha and beta subunits of F1 ATP synthase"/>
    <property type="match status" value="1"/>
</dbReference>
<dbReference type="SUPFAM" id="SSF50615">
    <property type="entry name" value="N-terminal domain of alpha and beta subunits of F1 ATP synthase"/>
    <property type="match status" value="1"/>
</dbReference>
<dbReference type="SUPFAM" id="SSF52540">
    <property type="entry name" value="P-loop containing nucleoside triphosphate hydrolases"/>
    <property type="match status" value="1"/>
</dbReference>
<dbReference type="PROSITE" id="PS00152">
    <property type="entry name" value="ATPASE_ALPHA_BETA"/>
    <property type="match status" value="1"/>
</dbReference>
<organism>
    <name type="scientific">Nocardioides sp. (strain ATCC BAA-499 / JS614)</name>
    <dbReference type="NCBI Taxonomy" id="196162"/>
    <lineage>
        <taxon>Bacteria</taxon>
        <taxon>Bacillati</taxon>
        <taxon>Actinomycetota</taxon>
        <taxon>Actinomycetes</taxon>
        <taxon>Propionibacteriales</taxon>
        <taxon>Nocardioidaceae</taxon>
        <taxon>Nocardioides</taxon>
    </lineage>
</organism>
<feature type="chain" id="PRO_0000339557" description="ATP synthase subunit beta">
    <location>
        <begin position="1"/>
        <end position="484"/>
    </location>
</feature>
<feature type="binding site" evidence="1">
    <location>
        <begin position="169"/>
        <end position="176"/>
    </location>
    <ligand>
        <name>ATP</name>
        <dbReference type="ChEBI" id="CHEBI:30616"/>
    </ligand>
</feature>
<comment type="function">
    <text evidence="1">Produces ATP from ADP in the presence of a proton gradient across the membrane. The catalytic sites are hosted primarily by the beta subunits.</text>
</comment>
<comment type="catalytic activity">
    <reaction evidence="1">
        <text>ATP + H2O + 4 H(+)(in) = ADP + phosphate + 5 H(+)(out)</text>
        <dbReference type="Rhea" id="RHEA:57720"/>
        <dbReference type="ChEBI" id="CHEBI:15377"/>
        <dbReference type="ChEBI" id="CHEBI:15378"/>
        <dbReference type="ChEBI" id="CHEBI:30616"/>
        <dbReference type="ChEBI" id="CHEBI:43474"/>
        <dbReference type="ChEBI" id="CHEBI:456216"/>
        <dbReference type="EC" id="7.1.2.2"/>
    </reaction>
</comment>
<comment type="subunit">
    <text evidence="1">F-type ATPases have 2 components, CF(1) - the catalytic core - and CF(0) - the membrane proton channel. CF(1) has five subunits: alpha(3), beta(3), gamma(1), delta(1), epsilon(1). CF(0) has three main subunits: a(1), b(2) and c(9-12). The alpha and beta chains form an alternating ring which encloses part of the gamma chain. CF(1) is attached to CF(0) by a central stalk formed by the gamma and epsilon chains, while a peripheral stalk is formed by the delta and b chains.</text>
</comment>
<comment type="subcellular location">
    <subcellularLocation>
        <location evidence="1">Cell membrane</location>
        <topology evidence="1">Peripheral membrane protein</topology>
    </subcellularLocation>
</comment>
<comment type="similarity">
    <text evidence="1">Belongs to the ATPase alpha/beta chains family.</text>
</comment>
<sequence>MTATIEETQETGSAGVGRIARVIGPVVDVEFPVDSMPEIYNKLECELTLEGEAKILSLEVAQHIGDGMVRAISLQPTDGLVRGAQVTDTGGPITVPVGDATLGKVFNTLGEVLNLEEGETFEVKERWGIHRKAPAFDQLESKTQMFETGIKVIDLLTPYVQGGKIGLFGGAGVGKTVLIQEMIARVAKDHGGVSVFAGVGERTREGNDLIVEMEEAGVIGQTALVFGQMDEPPGTRLRVALSALTMAEYFRDVQGQDVLLFIDNIFRFTQAGSEVSTLLGRMPSAVGYQPNLADEMGTLQERITSTRGHSITSMQAIYVPADDYTDPAPATTFAHLDATTELSREIASLGIYPAVDPLTSTSRILDPQYIGQAHYDCAIRIKQILQRNKELQDIIAILGVDELSEEDKIIVSRARRIQRFLSQNTYVAKQFTGIEGSTVPVSETIEGFNKIADGEYDHVAEQAFFMCGGLDDVEQKWAEIQKSL</sequence>
<name>ATPB_NOCSJ</name>
<evidence type="ECO:0000255" key="1">
    <source>
        <dbReference type="HAMAP-Rule" id="MF_01347"/>
    </source>
</evidence>
<accession>A1SHJ1</accession>
<gene>
    <name evidence="1" type="primary">atpD</name>
    <name type="ordered locus">Noca_1763</name>
</gene>